<protein>
    <recommendedName>
        <fullName>Leucine-rich repeat-containing protein 58</fullName>
    </recommendedName>
</protein>
<dbReference type="EMBL" id="BC013757">
    <property type="protein sequence ID" value="AAH13757.1"/>
    <property type="status" value="ALT_INIT"/>
    <property type="molecule type" value="mRNA"/>
</dbReference>
<dbReference type="CCDS" id="CCDS46892.1"/>
<dbReference type="RefSeq" id="NP_001093148.1">
    <property type="nucleotide sequence ID" value="NM_001099678.2"/>
</dbReference>
<dbReference type="SMR" id="Q96CX6"/>
<dbReference type="BioGRID" id="125468">
    <property type="interactions" value="9"/>
</dbReference>
<dbReference type="FunCoup" id="Q96CX6">
    <property type="interactions" value="668"/>
</dbReference>
<dbReference type="IntAct" id="Q96CX6">
    <property type="interactions" value="6"/>
</dbReference>
<dbReference type="MINT" id="Q96CX6"/>
<dbReference type="STRING" id="9606.ENSP00000295628"/>
<dbReference type="GlyGen" id="Q96CX6">
    <property type="glycosylation" value="1 site, 1 O-linked glycan (1 site)"/>
</dbReference>
<dbReference type="iPTMnet" id="Q96CX6"/>
<dbReference type="PhosphoSitePlus" id="Q96CX6"/>
<dbReference type="BioMuta" id="LRRC58"/>
<dbReference type="DMDM" id="162416229"/>
<dbReference type="jPOST" id="Q96CX6"/>
<dbReference type="MassIVE" id="Q96CX6"/>
<dbReference type="PaxDb" id="9606-ENSP00000295628"/>
<dbReference type="PeptideAtlas" id="Q96CX6"/>
<dbReference type="ProteomicsDB" id="76240"/>
<dbReference type="Pumba" id="Q96CX6"/>
<dbReference type="Antibodypedia" id="58235">
    <property type="antibodies" value="18 antibodies from 11 providers"/>
</dbReference>
<dbReference type="DNASU" id="116064"/>
<dbReference type="Ensembl" id="ENST00000295628.4">
    <property type="protein sequence ID" value="ENSP00000295628.3"/>
    <property type="gene ID" value="ENSG00000163428.4"/>
</dbReference>
<dbReference type="GeneID" id="116064"/>
<dbReference type="KEGG" id="hsa:116064"/>
<dbReference type="MANE-Select" id="ENST00000295628.4">
    <property type="protein sequence ID" value="ENSP00000295628.3"/>
    <property type="RefSeq nucleotide sequence ID" value="NM_001099678.2"/>
    <property type="RefSeq protein sequence ID" value="NP_001093148.1"/>
</dbReference>
<dbReference type="UCSC" id="uc003edr.3">
    <property type="organism name" value="human"/>
</dbReference>
<dbReference type="AGR" id="HGNC:26968"/>
<dbReference type="CTD" id="116064"/>
<dbReference type="DisGeNET" id="116064"/>
<dbReference type="GeneCards" id="LRRC58"/>
<dbReference type="HGNC" id="HGNC:26968">
    <property type="gene designation" value="LRRC58"/>
</dbReference>
<dbReference type="HPA" id="ENSG00000163428">
    <property type="expression patterns" value="Low tissue specificity"/>
</dbReference>
<dbReference type="neXtProt" id="NX_Q96CX6"/>
<dbReference type="OpenTargets" id="ENSG00000163428"/>
<dbReference type="PharmGKB" id="PA142671517"/>
<dbReference type="VEuPathDB" id="HostDB:ENSG00000163428"/>
<dbReference type="eggNOG" id="KOG0619">
    <property type="taxonomic scope" value="Eukaryota"/>
</dbReference>
<dbReference type="GeneTree" id="ENSGT00940000156556"/>
<dbReference type="HOGENOM" id="CLU_000288_18_2_1"/>
<dbReference type="InParanoid" id="Q96CX6"/>
<dbReference type="OMA" id="GLSQWFP"/>
<dbReference type="OrthoDB" id="1053178at2759"/>
<dbReference type="PAN-GO" id="Q96CX6">
    <property type="GO annotations" value="0 GO annotations based on evolutionary models"/>
</dbReference>
<dbReference type="PhylomeDB" id="Q96CX6"/>
<dbReference type="TreeFam" id="TF351911"/>
<dbReference type="PathwayCommons" id="Q96CX6"/>
<dbReference type="SignaLink" id="Q96CX6"/>
<dbReference type="BioGRID-ORCS" id="116064">
    <property type="hits" value="14 hits in 1150 CRISPR screens"/>
</dbReference>
<dbReference type="ChiTaRS" id="LRRC58">
    <property type="organism name" value="human"/>
</dbReference>
<dbReference type="GenomeRNAi" id="116064"/>
<dbReference type="Pharos" id="Q96CX6">
    <property type="development level" value="Tdark"/>
</dbReference>
<dbReference type="PRO" id="PR:Q96CX6"/>
<dbReference type="Proteomes" id="UP000005640">
    <property type="component" value="Chromosome 3"/>
</dbReference>
<dbReference type="RNAct" id="Q96CX6">
    <property type="molecule type" value="protein"/>
</dbReference>
<dbReference type="Bgee" id="ENSG00000163428">
    <property type="expression patterns" value="Expressed in upper arm skin and 197 other cell types or tissues"/>
</dbReference>
<dbReference type="GO" id="GO:0035556">
    <property type="term" value="P:intracellular signal transduction"/>
    <property type="evidence" value="ECO:0000318"/>
    <property type="project" value="GO_Central"/>
</dbReference>
<dbReference type="Gene3D" id="3.80.10.10">
    <property type="entry name" value="Ribonuclease Inhibitor"/>
    <property type="match status" value="2"/>
</dbReference>
<dbReference type="InterPro" id="IPR001611">
    <property type="entry name" value="Leu-rich_rpt"/>
</dbReference>
<dbReference type="InterPro" id="IPR003591">
    <property type="entry name" value="Leu-rich_rpt_typical-subtyp"/>
</dbReference>
<dbReference type="InterPro" id="IPR050715">
    <property type="entry name" value="LRR-SigEffector_domain"/>
</dbReference>
<dbReference type="InterPro" id="IPR032675">
    <property type="entry name" value="LRR_dom_sf"/>
</dbReference>
<dbReference type="PANTHER" id="PTHR45752">
    <property type="entry name" value="LEUCINE-RICH REPEAT-CONTAINING"/>
    <property type="match status" value="1"/>
</dbReference>
<dbReference type="PANTHER" id="PTHR45752:SF13">
    <property type="entry name" value="LEUCINE-RICH REPEAT-CONTAINING PROTEIN 58"/>
    <property type="match status" value="1"/>
</dbReference>
<dbReference type="Pfam" id="PF00560">
    <property type="entry name" value="LRR_1"/>
    <property type="match status" value="3"/>
</dbReference>
<dbReference type="Pfam" id="PF13855">
    <property type="entry name" value="LRR_8"/>
    <property type="match status" value="2"/>
</dbReference>
<dbReference type="SMART" id="SM00369">
    <property type="entry name" value="LRR_TYP"/>
    <property type="match status" value="7"/>
</dbReference>
<dbReference type="SUPFAM" id="SSF52058">
    <property type="entry name" value="L domain-like"/>
    <property type="match status" value="1"/>
</dbReference>
<dbReference type="PROSITE" id="PS51450">
    <property type="entry name" value="LRR"/>
    <property type="match status" value="8"/>
</dbReference>
<sequence>MEEAGAAVVTAGEAELNWSRLSVSTETLESELEARGEERRGAREALLRLLLPHNRLVSLPRALGSGFPHLQLLDVSGNALTALGPELLALRGLRTLLAKNNRLGGPSALPKGLAQSPLCRSLQVLNLSGNCFQEVPASLLELRALQTLSLGGNQLQSIPAEIENLQSLECLYLGGNFIKEIPPELGNLPSLNYLVLCDNKIQSIPPQLSQLHSLRSLSLHNNLLTYLPREILNLIHLEELSLRGNPLVVRFVRDLTYDPPTLLELAARTIKIRNISYTPYDLPGNLLRYLGSASNCPNPKCGGVYFDCCVRQIKFVDFCGKYRLPLMHYLCSPECSSPCSSASHSSTSQSESDSEDEASVAARRMQKVLLG</sequence>
<evidence type="ECO:0000256" key="1">
    <source>
        <dbReference type="SAM" id="MobiDB-lite"/>
    </source>
</evidence>
<evidence type="ECO:0000305" key="2"/>
<evidence type="ECO:0007744" key="3">
    <source>
    </source>
</evidence>
<accession>Q96CX6</accession>
<keyword id="KW-0433">Leucine-rich repeat</keyword>
<keyword id="KW-0597">Phosphoprotein</keyword>
<keyword id="KW-1267">Proteomics identification</keyword>
<keyword id="KW-1185">Reference proteome</keyword>
<keyword id="KW-0677">Repeat</keyword>
<gene>
    <name type="primary">LRRC58</name>
</gene>
<name>LRC58_HUMAN</name>
<proteinExistence type="evidence at protein level"/>
<organism>
    <name type="scientific">Homo sapiens</name>
    <name type="common">Human</name>
    <dbReference type="NCBI Taxonomy" id="9606"/>
    <lineage>
        <taxon>Eukaryota</taxon>
        <taxon>Metazoa</taxon>
        <taxon>Chordata</taxon>
        <taxon>Craniata</taxon>
        <taxon>Vertebrata</taxon>
        <taxon>Euteleostomi</taxon>
        <taxon>Mammalia</taxon>
        <taxon>Eutheria</taxon>
        <taxon>Euarchontoglires</taxon>
        <taxon>Primates</taxon>
        <taxon>Haplorrhini</taxon>
        <taxon>Catarrhini</taxon>
        <taxon>Hominidae</taxon>
        <taxon>Homo</taxon>
    </lineage>
</organism>
<reference key="1">
    <citation type="journal article" date="2004" name="Genome Res.">
        <title>The status, quality, and expansion of the NIH full-length cDNA project: the Mammalian Gene Collection (MGC).</title>
        <authorList>
            <consortium name="The MGC Project Team"/>
        </authorList>
    </citation>
    <scope>NUCLEOTIDE SEQUENCE [LARGE SCALE MRNA]</scope>
    <source>
        <tissue>Testis</tissue>
    </source>
</reference>
<reference key="2">
    <citation type="journal article" date="2009" name="Sci. Signal.">
        <title>Quantitative phosphoproteomic analysis of T cell receptor signaling reveals system-wide modulation of protein-protein interactions.</title>
        <authorList>
            <person name="Mayya V."/>
            <person name="Lundgren D.H."/>
            <person name="Hwang S.-I."/>
            <person name="Rezaul K."/>
            <person name="Wu L."/>
            <person name="Eng J.K."/>
            <person name="Rodionov V."/>
            <person name="Han D.K."/>
        </authorList>
    </citation>
    <scope>PHOSPHORYLATION [LARGE SCALE ANALYSIS] AT SER-24</scope>
    <scope>IDENTIFICATION BY MASS SPECTROMETRY [LARGE SCALE ANALYSIS]</scope>
    <source>
        <tissue>Leukemic T-cell</tissue>
    </source>
</reference>
<comment type="sequence caution" evidence="2">
    <conflict type="erroneous initiation">
        <sequence resource="EMBL-CDS" id="AAH13757"/>
    </conflict>
</comment>
<feature type="chain" id="PRO_0000312017" description="Leucine-rich repeat-containing protein 58">
    <location>
        <begin position="1"/>
        <end position="371"/>
    </location>
</feature>
<feature type="repeat" description="LRR 1">
    <location>
        <begin position="45"/>
        <end position="66"/>
    </location>
</feature>
<feature type="repeat" description="LRR 2">
    <location>
        <begin position="69"/>
        <end position="91"/>
    </location>
</feature>
<feature type="repeat" description="LRR 3">
    <location>
        <begin position="92"/>
        <end position="113"/>
    </location>
</feature>
<feature type="repeat" description="LRR 4">
    <location>
        <begin position="121"/>
        <end position="143"/>
    </location>
</feature>
<feature type="repeat" description="LRR 5">
    <location>
        <begin position="144"/>
        <end position="166"/>
    </location>
</feature>
<feature type="repeat" description="LRR 6">
    <location>
        <begin position="167"/>
        <end position="189"/>
    </location>
</feature>
<feature type="repeat" description="LRR 7">
    <location>
        <begin position="190"/>
        <end position="211"/>
    </location>
</feature>
<feature type="repeat" description="LRR 8">
    <location>
        <begin position="213"/>
        <end position="234"/>
    </location>
</feature>
<feature type="repeat" description="LRR 9">
    <location>
        <begin position="236"/>
        <end position="256"/>
    </location>
</feature>
<feature type="region of interest" description="Disordered" evidence="1">
    <location>
        <begin position="340"/>
        <end position="361"/>
    </location>
</feature>
<feature type="compositionally biased region" description="Low complexity" evidence="1">
    <location>
        <begin position="340"/>
        <end position="351"/>
    </location>
</feature>
<feature type="modified residue" description="Phosphoserine" evidence="3">
    <location>
        <position position="24"/>
    </location>
</feature>